<protein>
    <recommendedName>
        <fullName>Intracellular maltogenic amylase</fullName>
        <ecNumber>3.2.1.-</ecNumber>
    </recommendedName>
</protein>
<proteinExistence type="inferred from homology"/>
<gene>
    <name type="primary">bbmA</name>
    <name type="synonym">yvdF</name>
    <name type="ordered locus">BSU34620</name>
</gene>
<evidence type="ECO:0000250" key="1"/>
<evidence type="ECO:0000250" key="2">
    <source>
        <dbReference type="UniProtKB" id="P38940"/>
    </source>
</evidence>
<evidence type="ECO:0000250" key="3">
    <source>
        <dbReference type="UniProtKB" id="Q9R9H8"/>
    </source>
</evidence>
<evidence type="ECO:0000305" key="4"/>
<name>BBMA_BACSU</name>
<keyword id="KW-0106">Calcium</keyword>
<keyword id="KW-0119">Carbohydrate metabolism</keyword>
<keyword id="KW-0963">Cytoplasm</keyword>
<keyword id="KW-0326">Glycosidase</keyword>
<keyword id="KW-0378">Hydrolase</keyword>
<keyword id="KW-0479">Metal-binding</keyword>
<keyword id="KW-1185">Reference proteome</keyword>
<sequence length="588" mass="68722">MEYAAIHHQPFSTDAYSYDGRTVHIKIRTKKGDADHIRFIWGDPYEYNDGKWSANEQPMRKIAATEMHDYWFAEVVPPFRRLQYAFVVTDDHEDIFFGSSGVCPYNEKTLETIHYYFKFPFVHEADTFQAPEWVKSTVWYQIFPERFANGREDLSPKNALPWGSKDPDVNDFFGGDLQGIVDKLDYLEDLGVNGIYLTPIFSAPSNHKYDTLDYFSIDPHFGDPELFRTLVSQLHQRGMRIMLDAVFNHIGSASPQWQDVVKNGDQSRYKDWFHIHSFPVTDDNYDRFAFTADMPKLNTANPEVQKYLLDIALYWIREFDIDGWRLDVANEVDHVFWKTFRQAVSTEKPDVYILGEIWHSAEPWLRGDEFHAAMNYPFTEPMIEYFADQTISASRMAHRVNAHLMNGMKQANEVMFNLLDSHDTKRLLTRCRNDEKKARALLAFMFAQTGSPCIYYGTEIGLNGENDPLCRKCMVWEKEKQNQDMLQFMKRLIALRKQENTLLTEGHLEWNLLDDKNDFISFSRTLDEKILIYFFNQGNVVQHVSLRELNIDRNKKICDAWTEQPLQHHDVIAVQPGEFLILSAAAPV</sequence>
<organism>
    <name type="scientific">Bacillus subtilis (strain 168)</name>
    <dbReference type="NCBI Taxonomy" id="224308"/>
    <lineage>
        <taxon>Bacteria</taxon>
        <taxon>Bacillati</taxon>
        <taxon>Bacillota</taxon>
        <taxon>Bacilli</taxon>
        <taxon>Bacillales</taxon>
        <taxon>Bacillaceae</taxon>
        <taxon>Bacillus</taxon>
    </lineage>
</organism>
<reference key="1">
    <citation type="submission" date="1997-04" db="EMBL/GenBank/DDBJ databases">
        <authorList>
            <person name="Denizot F."/>
        </authorList>
    </citation>
    <scope>NUCLEOTIDE SEQUENCE [GENOMIC DNA]</scope>
</reference>
<reference key="2">
    <citation type="journal article" date="1997" name="Nature">
        <title>The complete genome sequence of the Gram-positive bacterium Bacillus subtilis.</title>
        <authorList>
            <person name="Kunst F."/>
            <person name="Ogasawara N."/>
            <person name="Moszer I."/>
            <person name="Albertini A.M."/>
            <person name="Alloni G."/>
            <person name="Azevedo V."/>
            <person name="Bertero M.G."/>
            <person name="Bessieres P."/>
            <person name="Bolotin A."/>
            <person name="Borchert S."/>
            <person name="Borriss R."/>
            <person name="Boursier L."/>
            <person name="Brans A."/>
            <person name="Braun M."/>
            <person name="Brignell S.C."/>
            <person name="Bron S."/>
            <person name="Brouillet S."/>
            <person name="Bruschi C.V."/>
            <person name="Caldwell B."/>
            <person name="Capuano V."/>
            <person name="Carter N.M."/>
            <person name="Choi S.-K."/>
            <person name="Codani J.-J."/>
            <person name="Connerton I.F."/>
            <person name="Cummings N.J."/>
            <person name="Daniel R.A."/>
            <person name="Denizot F."/>
            <person name="Devine K.M."/>
            <person name="Duesterhoeft A."/>
            <person name="Ehrlich S.D."/>
            <person name="Emmerson P.T."/>
            <person name="Entian K.-D."/>
            <person name="Errington J."/>
            <person name="Fabret C."/>
            <person name="Ferrari E."/>
            <person name="Foulger D."/>
            <person name="Fritz C."/>
            <person name="Fujita M."/>
            <person name="Fujita Y."/>
            <person name="Fuma S."/>
            <person name="Galizzi A."/>
            <person name="Galleron N."/>
            <person name="Ghim S.-Y."/>
            <person name="Glaser P."/>
            <person name="Goffeau A."/>
            <person name="Golightly E.J."/>
            <person name="Grandi G."/>
            <person name="Guiseppi G."/>
            <person name="Guy B.J."/>
            <person name="Haga K."/>
            <person name="Haiech J."/>
            <person name="Harwood C.R."/>
            <person name="Henaut A."/>
            <person name="Hilbert H."/>
            <person name="Holsappel S."/>
            <person name="Hosono S."/>
            <person name="Hullo M.-F."/>
            <person name="Itaya M."/>
            <person name="Jones L.-M."/>
            <person name="Joris B."/>
            <person name="Karamata D."/>
            <person name="Kasahara Y."/>
            <person name="Klaerr-Blanchard M."/>
            <person name="Klein C."/>
            <person name="Kobayashi Y."/>
            <person name="Koetter P."/>
            <person name="Koningstein G."/>
            <person name="Krogh S."/>
            <person name="Kumano M."/>
            <person name="Kurita K."/>
            <person name="Lapidus A."/>
            <person name="Lardinois S."/>
            <person name="Lauber J."/>
            <person name="Lazarevic V."/>
            <person name="Lee S.-M."/>
            <person name="Levine A."/>
            <person name="Liu H."/>
            <person name="Masuda S."/>
            <person name="Mauel C."/>
            <person name="Medigue C."/>
            <person name="Medina N."/>
            <person name="Mellado R.P."/>
            <person name="Mizuno M."/>
            <person name="Moestl D."/>
            <person name="Nakai S."/>
            <person name="Noback M."/>
            <person name="Noone D."/>
            <person name="O'Reilly M."/>
            <person name="Ogawa K."/>
            <person name="Ogiwara A."/>
            <person name="Oudega B."/>
            <person name="Park S.-H."/>
            <person name="Parro V."/>
            <person name="Pohl T.M."/>
            <person name="Portetelle D."/>
            <person name="Porwollik S."/>
            <person name="Prescott A.M."/>
            <person name="Presecan E."/>
            <person name="Pujic P."/>
            <person name="Purnelle B."/>
            <person name="Rapoport G."/>
            <person name="Rey M."/>
            <person name="Reynolds S."/>
            <person name="Rieger M."/>
            <person name="Rivolta C."/>
            <person name="Rocha E."/>
            <person name="Roche B."/>
            <person name="Rose M."/>
            <person name="Sadaie Y."/>
            <person name="Sato T."/>
            <person name="Scanlan E."/>
            <person name="Schleich S."/>
            <person name="Schroeter R."/>
            <person name="Scoffone F."/>
            <person name="Sekiguchi J."/>
            <person name="Sekowska A."/>
            <person name="Seror S.J."/>
            <person name="Serror P."/>
            <person name="Shin B.-S."/>
            <person name="Soldo B."/>
            <person name="Sorokin A."/>
            <person name="Tacconi E."/>
            <person name="Takagi T."/>
            <person name="Takahashi H."/>
            <person name="Takemaru K."/>
            <person name="Takeuchi M."/>
            <person name="Tamakoshi A."/>
            <person name="Tanaka T."/>
            <person name="Terpstra P."/>
            <person name="Tognoni A."/>
            <person name="Tosato V."/>
            <person name="Uchiyama S."/>
            <person name="Vandenbol M."/>
            <person name="Vannier F."/>
            <person name="Vassarotti A."/>
            <person name="Viari A."/>
            <person name="Wambutt R."/>
            <person name="Wedler E."/>
            <person name="Wedler H."/>
            <person name="Weitzenegger T."/>
            <person name="Winters P."/>
            <person name="Wipat A."/>
            <person name="Yamamoto H."/>
            <person name="Yamane K."/>
            <person name="Yasumoto K."/>
            <person name="Yata K."/>
            <person name="Yoshida K."/>
            <person name="Yoshikawa H.-F."/>
            <person name="Zumstein E."/>
            <person name="Yoshikawa H."/>
            <person name="Danchin A."/>
        </authorList>
    </citation>
    <scope>NUCLEOTIDE SEQUENCE [LARGE SCALE GENOMIC DNA]</scope>
    <source>
        <strain>168</strain>
    </source>
</reference>
<accession>O06988</accession>
<accession>Q795G7</accession>
<feature type="chain" id="PRO_0000366977" description="Intracellular maltogenic amylase">
    <location>
        <begin position="1"/>
        <end position="588"/>
    </location>
</feature>
<feature type="active site" description="Nucleophile" evidence="2">
    <location>
        <position position="327"/>
    </location>
</feature>
<feature type="active site" description="Proton donor" evidence="2">
    <location>
        <position position="356"/>
    </location>
</feature>
<feature type="binding site" evidence="2">
    <location>
        <position position="149"/>
    </location>
    <ligand>
        <name>Ca(2+)</name>
        <dbReference type="ChEBI" id="CHEBI:29108"/>
    </ligand>
</feature>
<feature type="binding site" evidence="2">
    <location>
        <position position="155"/>
    </location>
    <ligand>
        <name>Ca(2+)</name>
        <dbReference type="ChEBI" id="CHEBI:29108"/>
    </ligand>
</feature>
<feature type="binding site" evidence="2">
    <location>
        <position position="174"/>
    </location>
    <ligand>
        <name>Ca(2+)</name>
        <dbReference type="ChEBI" id="CHEBI:29108"/>
    </ligand>
</feature>
<feature type="binding site" evidence="2">
    <location>
        <position position="176"/>
    </location>
    <ligand>
        <name>Ca(2+)</name>
        <dbReference type="ChEBI" id="CHEBI:29108"/>
    </ligand>
</feature>
<feature type="binding site" evidence="2">
    <location>
        <position position="249"/>
    </location>
    <ligand>
        <name>substrate</name>
    </ligand>
</feature>
<feature type="binding site" evidence="2">
    <location>
        <position position="325"/>
    </location>
    <ligand>
        <name>substrate</name>
    </ligand>
</feature>
<feature type="binding site" evidence="2">
    <location>
        <begin position="422"/>
        <end position="423"/>
    </location>
    <ligand>
        <name>substrate</name>
    </ligand>
</feature>
<feature type="binding site" evidence="2">
    <location>
        <position position="467"/>
    </location>
    <ligand>
        <name>substrate</name>
    </ligand>
</feature>
<feature type="binding site" evidence="2">
    <location>
        <position position="471"/>
    </location>
    <ligand>
        <name>substrate</name>
    </ligand>
</feature>
<feature type="site" description="Transition state stabilizer" evidence="1">
    <location>
        <position position="423"/>
    </location>
</feature>
<comment type="function">
    <text evidence="1">Hydrolyzes beta-cyclodextrin to maltose and glucose, soluble starch to maltose and glucose, and pullulan to panose with trace amounts of maltose and glucose. It is also able to hydrolyze acarbose. Can also exhibit a transglycosylation activity transferring glucose or maltose to another moiety of sugars by forming alpha-(1,6)- and alpha-(1,3)-glycosidic linkages upon the hydrolysis of substrate at concentrations of 5% or higher (By similarity).</text>
</comment>
<comment type="cofactor">
    <cofactor evidence="2">
        <name>Ca(2+)</name>
        <dbReference type="ChEBI" id="CHEBI:29108"/>
    </cofactor>
    <text evidence="2">Binds 1 Ca(2+) ion per subunit.</text>
</comment>
<comment type="subunit">
    <text evidence="3">Monomer or homodimer; in equilibrium.</text>
</comment>
<comment type="subcellular location">
    <subcellularLocation>
        <location evidence="3">Cytoplasm</location>
    </subcellularLocation>
</comment>
<comment type="similarity">
    <text evidence="4">Belongs to the glycosyl hydrolase 13 family. BbmA subfamily.</text>
</comment>
<comment type="sequence caution" evidence="4">
    <conflict type="erroneous initiation">
        <sequence resource="EMBL-CDS" id="CAB08035"/>
    </conflict>
</comment>
<comment type="sequence caution" evidence="4">
    <conflict type="erroneous initiation">
        <sequence resource="EMBL-CDS" id="CAB15467"/>
    </conflict>
</comment>
<dbReference type="EC" id="3.2.1.-"/>
<dbReference type="EMBL" id="Z94043">
    <property type="protein sequence ID" value="CAB08035.1"/>
    <property type="status" value="ALT_INIT"/>
    <property type="molecule type" value="Genomic_DNA"/>
</dbReference>
<dbReference type="EMBL" id="AL009126">
    <property type="protein sequence ID" value="CAB15467.1"/>
    <property type="status" value="ALT_INIT"/>
    <property type="molecule type" value="Genomic_DNA"/>
</dbReference>
<dbReference type="PIR" id="F70033">
    <property type="entry name" value="F70033"/>
</dbReference>
<dbReference type="SMR" id="O06988"/>
<dbReference type="FunCoup" id="O06988">
    <property type="interactions" value="157"/>
</dbReference>
<dbReference type="STRING" id="224308.BSU34620"/>
<dbReference type="CAZy" id="CBM34">
    <property type="family name" value="Carbohydrate-Binding Module Family 34"/>
</dbReference>
<dbReference type="CAZy" id="GH13">
    <property type="family name" value="Glycoside Hydrolase Family 13"/>
</dbReference>
<dbReference type="PaxDb" id="224308-BSU34620"/>
<dbReference type="EnsemblBacteria" id="CAB15467">
    <property type="protein sequence ID" value="CAB15467"/>
    <property type="gene ID" value="BSU_34620"/>
</dbReference>
<dbReference type="GeneID" id="936514"/>
<dbReference type="KEGG" id="bsu:BSU34620"/>
<dbReference type="PATRIC" id="fig|224308.43.peg.3626"/>
<dbReference type="eggNOG" id="COG0366">
    <property type="taxonomic scope" value="Bacteria"/>
</dbReference>
<dbReference type="InParanoid" id="O06988"/>
<dbReference type="OrthoDB" id="9805159at2"/>
<dbReference type="BioCyc" id="BSUB:BSU34620-MONOMER"/>
<dbReference type="Proteomes" id="UP000001570">
    <property type="component" value="Chromosome"/>
</dbReference>
<dbReference type="GO" id="GO:0005737">
    <property type="term" value="C:cytoplasm"/>
    <property type="evidence" value="ECO:0007669"/>
    <property type="project" value="UniProtKB-SubCell"/>
</dbReference>
<dbReference type="GO" id="GO:0004553">
    <property type="term" value="F:hydrolase activity, hydrolyzing O-glycosyl compounds"/>
    <property type="evidence" value="ECO:0007669"/>
    <property type="project" value="InterPro"/>
</dbReference>
<dbReference type="GO" id="GO:0046872">
    <property type="term" value="F:metal ion binding"/>
    <property type="evidence" value="ECO:0007669"/>
    <property type="project" value="UniProtKB-KW"/>
</dbReference>
<dbReference type="GO" id="GO:0005975">
    <property type="term" value="P:carbohydrate metabolic process"/>
    <property type="evidence" value="ECO:0007669"/>
    <property type="project" value="InterPro"/>
</dbReference>
<dbReference type="CDD" id="cd11338">
    <property type="entry name" value="AmyAc_CMD"/>
    <property type="match status" value="1"/>
</dbReference>
<dbReference type="CDD" id="cd02857">
    <property type="entry name" value="E_set_CDase_PDE_N"/>
    <property type="match status" value="1"/>
</dbReference>
<dbReference type="Gene3D" id="3.20.20.80">
    <property type="entry name" value="Glycosidases"/>
    <property type="match status" value="1"/>
</dbReference>
<dbReference type="Gene3D" id="2.60.40.10">
    <property type="entry name" value="Immunoglobulins"/>
    <property type="match status" value="1"/>
</dbReference>
<dbReference type="Gene3D" id="3.90.400.10">
    <property type="entry name" value="Oligo-1,6-glucosidase, Domain 2"/>
    <property type="match status" value="1"/>
</dbReference>
<dbReference type="InterPro" id="IPR006047">
    <property type="entry name" value="Glyco_hydro_13_cat_dom"/>
</dbReference>
<dbReference type="InterPro" id="IPR004185">
    <property type="entry name" value="Glyco_hydro_13_lg-like_dom"/>
</dbReference>
<dbReference type="InterPro" id="IPR017853">
    <property type="entry name" value="Glycoside_hydrolase_SF"/>
</dbReference>
<dbReference type="InterPro" id="IPR013783">
    <property type="entry name" value="Ig-like_fold"/>
</dbReference>
<dbReference type="InterPro" id="IPR045857">
    <property type="entry name" value="O16G_dom_2"/>
</dbReference>
<dbReference type="PANTHER" id="PTHR10357">
    <property type="entry name" value="ALPHA-AMYLASE FAMILY MEMBER"/>
    <property type="match status" value="1"/>
</dbReference>
<dbReference type="PANTHER" id="PTHR10357:SF210">
    <property type="entry name" value="MALTODEXTRIN GLUCOSIDASE"/>
    <property type="match status" value="1"/>
</dbReference>
<dbReference type="Pfam" id="PF00128">
    <property type="entry name" value="Alpha-amylase"/>
    <property type="match status" value="1"/>
</dbReference>
<dbReference type="Pfam" id="PF02903">
    <property type="entry name" value="Alpha-amylase_N"/>
    <property type="match status" value="1"/>
</dbReference>
<dbReference type="SMART" id="SM00642">
    <property type="entry name" value="Aamy"/>
    <property type="match status" value="1"/>
</dbReference>
<dbReference type="SUPFAM" id="SSF51445">
    <property type="entry name" value="(Trans)glycosidases"/>
    <property type="match status" value="1"/>
</dbReference>